<evidence type="ECO:0000255" key="1">
    <source>
        <dbReference type="HAMAP-Rule" id="MF_00093"/>
    </source>
</evidence>
<accession>C4KYV2</accession>
<comment type="function">
    <text evidence="1">Peptide chain release factor 1 directs the termination of translation in response to the peptide chain termination codons UAG and UAA.</text>
</comment>
<comment type="subcellular location">
    <subcellularLocation>
        <location evidence="1">Cytoplasm</location>
    </subcellularLocation>
</comment>
<comment type="PTM">
    <text evidence="1">Methylated by PrmC. Methylation increases the termination efficiency of RF1.</text>
</comment>
<comment type="similarity">
    <text evidence="1">Belongs to the prokaryotic/mitochondrial release factor family.</text>
</comment>
<protein>
    <recommendedName>
        <fullName evidence="1">Peptide chain release factor 1</fullName>
        <shortName evidence="1">RF-1</shortName>
    </recommendedName>
</protein>
<dbReference type="EMBL" id="CP001615">
    <property type="protein sequence ID" value="ACQ70265.1"/>
    <property type="molecule type" value="Genomic_DNA"/>
</dbReference>
<dbReference type="RefSeq" id="WP_012727384.1">
    <property type="nucleotide sequence ID" value="NC_012673.1"/>
</dbReference>
<dbReference type="SMR" id="C4KYV2"/>
<dbReference type="STRING" id="360911.EAT1b_1338"/>
<dbReference type="KEGG" id="eat:EAT1b_1338"/>
<dbReference type="eggNOG" id="COG0216">
    <property type="taxonomic scope" value="Bacteria"/>
</dbReference>
<dbReference type="HOGENOM" id="CLU_036856_0_1_9"/>
<dbReference type="OrthoDB" id="9806673at2"/>
<dbReference type="Proteomes" id="UP000000716">
    <property type="component" value="Chromosome"/>
</dbReference>
<dbReference type="GO" id="GO:0005737">
    <property type="term" value="C:cytoplasm"/>
    <property type="evidence" value="ECO:0007669"/>
    <property type="project" value="UniProtKB-SubCell"/>
</dbReference>
<dbReference type="GO" id="GO:0016149">
    <property type="term" value="F:translation release factor activity, codon specific"/>
    <property type="evidence" value="ECO:0007669"/>
    <property type="project" value="UniProtKB-UniRule"/>
</dbReference>
<dbReference type="FunFam" id="3.30.160.20:FF:000004">
    <property type="entry name" value="Peptide chain release factor 1"/>
    <property type="match status" value="1"/>
</dbReference>
<dbReference type="FunFam" id="3.30.70.1660:FF:000002">
    <property type="entry name" value="Peptide chain release factor 1"/>
    <property type="match status" value="1"/>
</dbReference>
<dbReference type="FunFam" id="3.30.70.1660:FF:000004">
    <property type="entry name" value="Peptide chain release factor 1"/>
    <property type="match status" value="1"/>
</dbReference>
<dbReference type="Gene3D" id="3.30.160.20">
    <property type="match status" value="1"/>
</dbReference>
<dbReference type="Gene3D" id="3.30.70.1660">
    <property type="match status" value="2"/>
</dbReference>
<dbReference type="Gene3D" id="6.10.140.1950">
    <property type="match status" value="1"/>
</dbReference>
<dbReference type="HAMAP" id="MF_00093">
    <property type="entry name" value="Rel_fac_1"/>
    <property type="match status" value="1"/>
</dbReference>
<dbReference type="InterPro" id="IPR005139">
    <property type="entry name" value="PCRF"/>
</dbReference>
<dbReference type="InterPro" id="IPR000352">
    <property type="entry name" value="Pep_chain_release_fac_I"/>
</dbReference>
<dbReference type="InterPro" id="IPR045853">
    <property type="entry name" value="Pep_chain_release_fac_I_sf"/>
</dbReference>
<dbReference type="InterPro" id="IPR050057">
    <property type="entry name" value="Prokaryotic/Mito_RF"/>
</dbReference>
<dbReference type="InterPro" id="IPR004373">
    <property type="entry name" value="RF-1"/>
</dbReference>
<dbReference type="NCBIfam" id="TIGR00019">
    <property type="entry name" value="prfA"/>
    <property type="match status" value="1"/>
</dbReference>
<dbReference type="NCBIfam" id="NF001859">
    <property type="entry name" value="PRK00591.1"/>
    <property type="match status" value="1"/>
</dbReference>
<dbReference type="PANTHER" id="PTHR43804">
    <property type="entry name" value="LD18447P"/>
    <property type="match status" value="1"/>
</dbReference>
<dbReference type="PANTHER" id="PTHR43804:SF7">
    <property type="entry name" value="LD18447P"/>
    <property type="match status" value="1"/>
</dbReference>
<dbReference type="Pfam" id="PF03462">
    <property type="entry name" value="PCRF"/>
    <property type="match status" value="1"/>
</dbReference>
<dbReference type="Pfam" id="PF00472">
    <property type="entry name" value="RF-1"/>
    <property type="match status" value="1"/>
</dbReference>
<dbReference type="SMART" id="SM00937">
    <property type="entry name" value="PCRF"/>
    <property type="match status" value="1"/>
</dbReference>
<dbReference type="SUPFAM" id="SSF75620">
    <property type="entry name" value="Release factor"/>
    <property type="match status" value="1"/>
</dbReference>
<gene>
    <name evidence="1" type="primary">prfA</name>
    <name type="ordered locus">EAT1b_1338</name>
</gene>
<organism>
    <name type="scientific">Exiguobacterium sp. (strain ATCC BAA-1283 / AT1b)</name>
    <dbReference type="NCBI Taxonomy" id="360911"/>
    <lineage>
        <taxon>Bacteria</taxon>
        <taxon>Bacillati</taxon>
        <taxon>Bacillota</taxon>
        <taxon>Bacilli</taxon>
        <taxon>Bacillales</taxon>
        <taxon>Bacillales Family XII. Incertae Sedis</taxon>
        <taxon>Exiguobacterium</taxon>
    </lineage>
</organism>
<name>RF1_EXISA</name>
<sequence length="356" mass="40401">MFDRLSVLEDRYMQLNEMLADPEVLSDSTKLRQYSKEQAQLEETVQMYRQYKETSQAFKEAKSMLEDRTLDAEMRELAKEEMNLLEPEVKELEAKLRILLLPKDPNDEKNVIVEVRGAAGGDEAALFAGDLYKMYTRFAERQNWKVELIDANYTELGGFKEVTFMINGAGAYSKLKFENGAHRVQRVPSTESGGRIHTSTATVAVLPEAEDVEVHIDMKDVRVDTFTSSGPGGQSVNTTQSAVRLTHIPSGLVVSCQDEKSQHKNKDKAMKVLRARLYDKMQSEHMEELSAQRKSAVGTGDRSERIRTYNFPQSRVTDHRIGLTLQKLDRVLAGELEDIIDALIMDEQARLMEDAE</sequence>
<reference key="1">
    <citation type="journal article" date="2011" name="J. Bacteriol.">
        <title>Complete genome sequence of the Thermophilic Bacterium Exiguobacterium sp. AT1b.</title>
        <authorList>
            <person name="Vishnivetskaya T.A."/>
            <person name="Lucas S."/>
            <person name="Copeland A."/>
            <person name="Lapidus A."/>
            <person name="Glavina del Rio T."/>
            <person name="Dalin E."/>
            <person name="Tice H."/>
            <person name="Bruce D.C."/>
            <person name="Goodwin L.A."/>
            <person name="Pitluck S."/>
            <person name="Saunders E."/>
            <person name="Brettin T."/>
            <person name="Detter C."/>
            <person name="Han C."/>
            <person name="Larimer F."/>
            <person name="Land M.L."/>
            <person name="Hauser L.J."/>
            <person name="Kyrpides N.C."/>
            <person name="Ovchinnikova G."/>
            <person name="Kathariou S."/>
            <person name="Ramaley R.F."/>
            <person name="Rodrigues D.F."/>
            <person name="Hendrix C."/>
            <person name="Richardson P."/>
            <person name="Tiedje J.M."/>
        </authorList>
    </citation>
    <scope>NUCLEOTIDE SEQUENCE [LARGE SCALE GENOMIC DNA]</scope>
    <source>
        <strain>ATCC BAA-1283 / AT1b</strain>
    </source>
</reference>
<feature type="chain" id="PRO_1000202695" description="Peptide chain release factor 1">
    <location>
        <begin position="1"/>
        <end position="356"/>
    </location>
</feature>
<feature type="modified residue" description="N5-methylglutamine" evidence="1">
    <location>
        <position position="234"/>
    </location>
</feature>
<keyword id="KW-0963">Cytoplasm</keyword>
<keyword id="KW-0488">Methylation</keyword>
<keyword id="KW-0648">Protein biosynthesis</keyword>
<proteinExistence type="inferred from homology"/>